<organism>
    <name type="scientific">Listeria monocytogenes serovar 1/2a (strain ATCC BAA-679 / EGD-e)</name>
    <dbReference type="NCBI Taxonomy" id="169963"/>
    <lineage>
        <taxon>Bacteria</taxon>
        <taxon>Bacillati</taxon>
        <taxon>Bacillota</taxon>
        <taxon>Bacilli</taxon>
        <taxon>Bacillales</taxon>
        <taxon>Listeriaceae</taxon>
        <taxon>Listeria</taxon>
    </lineage>
</organism>
<dbReference type="EMBL" id="M67471">
    <property type="protein sequence ID" value="AAA25289.1"/>
    <property type="status" value="ALT_FRAME"/>
    <property type="molecule type" value="Genomic_DNA"/>
</dbReference>
<dbReference type="EMBL" id="AJ012346">
    <property type="protein sequence ID" value="CAC20628.1"/>
    <property type="molecule type" value="Genomic_DNA"/>
</dbReference>
<dbReference type="EMBL" id="DQ132794">
    <property type="protein sequence ID" value="AAZ53235.1"/>
    <property type="molecule type" value="Genomic_DNA"/>
</dbReference>
<dbReference type="EMBL" id="AL591975">
    <property type="protein sequence ID" value="CAC98512.1"/>
    <property type="molecule type" value="Genomic_DNA"/>
</dbReference>
<dbReference type="EMBL" id="U25448">
    <property type="protein sequence ID" value="AAA69530.1"/>
    <property type="molecule type" value="Genomic_DNA"/>
</dbReference>
<dbReference type="EMBL" id="U25451">
    <property type="protein sequence ID" value="AAA69533.1"/>
    <property type="molecule type" value="Genomic_DNA"/>
</dbReference>
<dbReference type="EMBL" id="U25454">
    <property type="protein sequence ID" value="AAA69536.1"/>
    <property type="molecule type" value="Genomic_DNA"/>
</dbReference>
<dbReference type="PIR" id="AB1129">
    <property type="entry name" value="AB1129"/>
</dbReference>
<dbReference type="RefSeq" id="NP_463962.1">
    <property type="nucleotide sequence ID" value="NC_003210.1"/>
</dbReference>
<dbReference type="RefSeq" id="WP_010989462.1">
    <property type="nucleotide sequence ID" value="NZ_CP149495.1"/>
</dbReference>
<dbReference type="PDB" id="1O6S">
    <property type="method" value="X-ray"/>
    <property type="resolution" value="1.80 A"/>
    <property type="chains" value="A=36-496"/>
</dbReference>
<dbReference type="PDB" id="1O6T">
    <property type="method" value="X-ray"/>
    <property type="resolution" value="1.60 A"/>
    <property type="chains" value="A=36-496"/>
</dbReference>
<dbReference type="PDB" id="1O6V">
    <property type="method" value="X-ray"/>
    <property type="resolution" value="1.50 A"/>
    <property type="chains" value="A/B=36-496"/>
</dbReference>
<dbReference type="PDB" id="2OMT">
    <property type="method" value="X-ray"/>
    <property type="resolution" value="2.00 A"/>
    <property type="chains" value="A=36-496"/>
</dbReference>
<dbReference type="PDB" id="2OMU">
    <property type="method" value="X-ray"/>
    <property type="resolution" value="1.80 A"/>
    <property type="chains" value="A=36-496"/>
</dbReference>
<dbReference type="PDB" id="2OMV">
    <property type="method" value="X-ray"/>
    <property type="resolution" value="1.90 A"/>
    <property type="chains" value="A=36-495"/>
</dbReference>
<dbReference type="PDB" id="2OMW">
    <property type="method" value="X-ray"/>
    <property type="resolution" value="1.85 A"/>
    <property type="chains" value="A=36-496"/>
</dbReference>
<dbReference type="PDB" id="2OMX">
    <property type="method" value="X-ray"/>
    <property type="resolution" value="1.70 A"/>
    <property type="chains" value="A=36-496"/>
</dbReference>
<dbReference type="PDB" id="2OMY">
    <property type="method" value="X-ray"/>
    <property type="resolution" value="1.70 A"/>
    <property type="chains" value="A=36-495"/>
</dbReference>
<dbReference type="PDB" id="2OMZ">
    <property type="method" value="X-ray"/>
    <property type="resolution" value="1.60 A"/>
    <property type="chains" value="A=36-495"/>
</dbReference>
<dbReference type="PDB" id="8H62">
    <property type="method" value="X-ray"/>
    <property type="resolution" value="1.91 A"/>
    <property type="chains" value="A=36-496"/>
</dbReference>
<dbReference type="PDB" id="8H63">
    <property type="method" value="X-ray"/>
    <property type="resolution" value="1.53 A"/>
    <property type="chains" value="A=36-496"/>
</dbReference>
<dbReference type="PDB" id="8H64">
    <property type="method" value="X-ray"/>
    <property type="resolution" value="2.35 A"/>
    <property type="chains" value="A/C/E/G=36-496"/>
</dbReference>
<dbReference type="PDBsum" id="1O6S"/>
<dbReference type="PDBsum" id="1O6T"/>
<dbReference type="PDBsum" id="1O6V"/>
<dbReference type="PDBsum" id="2OMT"/>
<dbReference type="PDBsum" id="2OMU"/>
<dbReference type="PDBsum" id="2OMV"/>
<dbReference type="PDBsum" id="2OMW"/>
<dbReference type="PDBsum" id="2OMX"/>
<dbReference type="PDBsum" id="2OMY"/>
<dbReference type="PDBsum" id="2OMZ"/>
<dbReference type="PDBsum" id="8H62"/>
<dbReference type="PDBsum" id="8H63"/>
<dbReference type="PDBsum" id="8H64"/>
<dbReference type="SMR" id="P0DJM0"/>
<dbReference type="IntAct" id="P0DJM0">
    <property type="interactions" value="1"/>
</dbReference>
<dbReference type="STRING" id="169963.gene:17593084"/>
<dbReference type="TCDB" id="8.A.43.1.12">
    <property type="family name" value="the neat-domain containing methaemoglobin heme sequestration (n-mhs) family"/>
</dbReference>
<dbReference type="PaxDb" id="169963-lmo0433"/>
<dbReference type="EnsemblBacteria" id="CAC98512">
    <property type="protein sequence ID" value="CAC98512"/>
    <property type="gene ID" value="CAC98512"/>
</dbReference>
<dbReference type="GeneID" id="985151"/>
<dbReference type="KEGG" id="lmo:lmo0433"/>
<dbReference type="PATRIC" id="fig|169963.11.peg.446"/>
<dbReference type="eggNOG" id="COG4886">
    <property type="taxonomic scope" value="Bacteria"/>
</dbReference>
<dbReference type="HOGENOM" id="CLU_019447_3_0_9"/>
<dbReference type="OrthoDB" id="2364935at2"/>
<dbReference type="PhylomeDB" id="P0DJM0"/>
<dbReference type="BioCyc" id="LMON169963:LMO0433-MONOMER"/>
<dbReference type="Reactome" id="R-HSA-8876493">
    <property type="pathway name" value="InlA-mediated entry of Listeria monocytogenes into host cells"/>
</dbReference>
<dbReference type="EvolutionaryTrace" id="P0DJM0"/>
<dbReference type="PHI-base" id="PHI:9300"/>
<dbReference type="PHI-base" id="PHI:9365"/>
<dbReference type="PHI-base" id="PHI:9817"/>
<dbReference type="Proteomes" id="UP000000817">
    <property type="component" value="Chromosome"/>
</dbReference>
<dbReference type="GO" id="GO:0005576">
    <property type="term" value="C:extracellular region"/>
    <property type="evidence" value="ECO:0007669"/>
    <property type="project" value="UniProtKB-SubCell"/>
</dbReference>
<dbReference type="GO" id="GO:0009274">
    <property type="term" value="C:peptidoglycan-based cell wall"/>
    <property type="evidence" value="ECO:0000304"/>
    <property type="project" value="Reactome"/>
</dbReference>
<dbReference type="FunFam" id="3.80.10.10:FF:001164">
    <property type="entry name" value="GH01279p"/>
    <property type="match status" value="1"/>
</dbReference>
<dbReference type="FunFam" id="2.60.40.1220:FF:000002">
    <property type="entry name" value="Internalin A"/>
    <property type="match status" value="1"/>
</dbReference>
<dbReference type="FunFam" id="2.60.40.4270:FF:000001">
    <property type="entry name" value="Internalin A"/>
    <property type="match status" value="1"/>
</dbReference>
<dbReference type="Gene3D" id="2.60.40.1220">
    <property type="match status" value="1"/>
</dbReference>
<dbReference type="Gene3D" id="2.60.40.4270">
    <property type="entry name" value="Listeria-Bacteroides repeat domain"/>
    <property type="match status" value="3"/>
</dbReference>
<dbReference type="Gene3D" id="3.80.10.10">
    <property type="entry name" value="Ribonuclease Inhibitor"/>
    <property type="match status" value="1"/>
</dbReference>
<dbReference type="InterPro" id="IPR014755">
    <property type="entry name" value="Cu-Rt/internalin_Ig-like"/>
</dbReference>
<dbReference type="InterPro" id="IPR014756">
    <property type="entry name" value="Ig_E-set"/>
</dbReference>
<dbReference type="InterPro" id="IPR012569">
    <property type="entry name" value="Inl_IR"/>
</dbReference>
<dbReference type="InterPro" id="IPR047600">
    <property type="entry name" value="InlA"/>
</dbReference>
<dbReference type="InterPro" id="IPR013378">
    <property type="entry name" value="InlB-like_B-rpt"/>
</dbReference>
<dbReference type="InterPro" id="IPR024634">
    <property type="entry name" value="Internalin_N"/>
</dbReference>
<dbReference type="InterPro" id="IPR001611">
    <property type="entry name" value="Leu-rich_rpt"/>
</dbReference>
<dbReference type="InterPro" id="IPR025875">
    <property type="entry name" value="Leu-rich_rpt_4"/>
</dbReference>
<dbReference type="InterPro" id="IPR003591">
    <property type="entry name" value="Leu-rich_rpt_typical-subtyp"/>
</dbReference>
<dbReference type="InterPro" id="IPR042229">
    <property type="entry name" value="Listeria/Bacterioides_rpt_sf"/>
</dbReference>
<dbReference type="InterPro" id="IPR019931">
    <property type="entry name" value="LPXTG_anchor"/>
</dbReference>
<dbReference type="InterPro" id="IPR032675">
    <property type="entry name" value="LRR_dom_sf"/>
</dbReference>
<dbReference type="InterPro" id="IPR050836">
    <property type="entry name" value="SDS22/Internalin_LRR"/>
</dbReference>
<dbReference type="NCBIfam" id="NF033189">
    <property type="entry name" value="internalin_A"/>
    <property type="match status" value="1"/>
</dbReference>
<dbReference type="NCBIfam" id="TIGR02543">
    <property type="entry name" value="List_Bact_rpt"/>
    <property type="match status" value="3"/>
</dbReference>
<dbReference type="NCBIfam" id="TIGR01167">
    <property type="entry name" value="LPXTG_anchor"/>
    <property type="match status" value="1"/>
</dbReference>
<dbReference type="PANTHER" id="PTHR46652">
    <property type="entry name" value="LEUCINE-RICH REPEAT AND IQ DOMAIN-CONTAINING PROTEIN 1-RELATED"/>
    <property type="match status" value="1"/>
</dbReference>
<dbReference type="PANTHER" id="PTHR46652:SF3">
    <property type="entry name" value="LEUCINE-RICH REPEAT-CONTAINING PROTEIN 9"/>
    <property type="match status" value="1"/>
</dbReference>
<dbReference type="Pfam" id="PF09479">
    <property type="entry name" value="Flg_new"/>
    <property type="match status" value="3"/>
</dbReference>
<dbReference type="Pfam" id="PF00746">
    <property type="entry name" value="Gram_pos_anchor"/>
    <property type="match status" value="1"/>
</dbReference>
<dbReference type="Pfam" id="PF12354">
    <property type="entry name" value="Internalin_N"/>
    <property type="match status" value="1"/>
</dbReference>
<dbReference type="Pfam" id="PF12799">
    <property type="entry name" value="LRR_4"/>
    <property type="match status" value="6"/>
</dbReference>
<dbReference type="Pfam" id="PF08191">
    <property type="entry name" value="LRR_adjacent"/>
    <property type="match status" value="1"/>
</dbReference>
<dbReference type="SMART" id="SM00365">
    <property type="entry name" value="LRR_SD22"/>
    <property type="match status" value="13"/>
</dbReference>
<dbReference type="SMART" id="SM00369">
    <property type="entry name" value="LRR_TYP"/>
    <property type="match status" value="12"/>
</dbReference>
<dbReference type="SUPFAM" id="SSF81296">
    <property type="entry name" value="E set domains"/>
    <property type="match status" value="1"/>
</dbReference>
<dbReference type="SUPFAM" id="SSF52058">
    <property type="entry name" value="L domain-like"/>
    <property type="match status" value="1"/>
</dbReference>
<dbReference type="PROSITE" id="PS50847">
    <property type="entry name" value="GRAM_POS_ANCHORING"/>
    <property type="match status" value="1"/>
</dbReference>
<dbReference type="PROSITE" id="PS51450">
    <property type="entry name" value="LRR"/>
    <property type="match status" value="14"/>
</dbReference>
<accession>P0DJM0</accession>
<accession>P25146</accession>
<accession>Q45GD5</accession>
<accession>Q45GD6</accession>
<accession>Q48748</accession>
<accession>Q48749</accession>
<accession>Q48750</accession>
<accession>Q48752</accession>
<accession>Q9EXG2</accession>
<sequence length="800" mass="86493">MRKKRYVWLKSILVAILVFGSGVWINTSNGTNAQAATITQDTPINQIFTDTALAEKMKTVLGKTNVTDTVSQTDLDQVTTLQADRLGIKSIDGVEYLNNLTQINFSNNQLTDITPLKNLTKLVDILMNNNQIADITPLANLTNLTGLTLFNNQITDIDPLKNLTNLNRLELSSNTISDISALSGLTSLQQLSFGNQVTDLKPLANLTTLERLDISSNKVSDISVLAKLTNLESLIATNNQISDITPLGILTNLDELSLNGNQLKDIGTLASLTNLTDLDLANNQISNLAPLSGLTKLTELKLGANQISNISPLAGLTALTNLELNENQLEDISPISNLKNLTYLTLYFNNISDISPVSSLTKLQRLFFYNNKVSDVSSLANLTNINWLSAGHNQISDLTPLANLTRITQLGLNDQAWTNAPVNYKANVSIPNTVKNVTGALIAPATISDGGSYTEPDITWNLPSYTNEVSYTFSQPVTIGKGTTTFSGTVTQPLKAIFNVKFHVDGKETTKEVEAGNLLTEPAKPVKEGHTFVGWFDAQTGGTKWNFSTDKMPTNDINLYAQFSINSYTATFDNDGVTTSQTVDYQGLLQEPTAPTKEGYTFKGWYDAKTGGDKWDFATSKMPAKNITLYAQYSANSYTATFDVDGKSTTQAVDYQGLLKEPKAPTKAGYTFKGWYDEKTDGKKWDFATDKMPANDITLYAQFTKNPVAPPTTGGNTPPTTNNGGNTTPPSANIPGSDTSNTSTGNSASTTSTMNAYDPYNSKEASLPTTGDSDNALYLLLGLLAVGTAMALTKKARASK</sequence>
<protein>
    <recommendedName>
        <fullName evidence="16">Internalin A</fullName>
    </recommendedName>
</protein>
<name>INLA_LISMO</name>
<evidence type="ECO:0000255" key="1">
    <source>
        <dbReference type="PROSITE-ProRule" id="PRU00477"/>
    </source>
</evidence>
<evidence type="ECO:0000256" key="2">
    <source>
        <dbReference type="SAM" id="MobiDB-lite"/>
    </source>
</evidence>
<evidence type="ECO:0000269" key="3">
    <source>
    </source>
</evidence>
<evidence type="ECO:0000269" key="4">
    <source>
    </source>
</evidence>
<evidence type="ECO:0000269" key="5">
    <source>
    </source>
</evidence>
<evidence type="ECO:0000269" key="6">
    <source>
    </source>
</evidence>
<evidence type="ECO:0000269" key="7">
    <source>
    </source>
</evidence>
<evidence type="ECO:0000269" key="8">
    <source>
    </source>
</evidence>
<evidence type="ECO:0000269" key="9">
    <source>
    </source>
</evidence>
<evidence type="ECO:0000269" key="10">
    <source>
    </source>
</evidence>
<evidence type="ECO:0000269" key="11">
    <source>
    </source>
</evidence>
<evidence type="ECO:0000269" key="12">
    <source>
    </source>
</evidence>
<evidence type="ECO:0000269" key="13">
    <source>
    </source>
</evidence>
<evidence type="ECO:0000269" key="14">
    <source>
    </source>
</evidence>
<evidence type="ECO:0000269" key="15">
    <source>
    </source>
</evidence>
<evidence type="ECO:0000303" key="16">
    <source>
    </source>
</evidence>
<evidence type="ECO:0000305" key="17"/>
<evidence type="ECO:0000305" key="18">
    <source>
    </source>
</evidence>
<evidence type="ECO:0000305" key="19">
    <source>
    </source>
</evidence>
<evidence type="ECO:0000305" key="20">
    <source>
    </source>
</evidence>
<evidence type="ECO:0000305" key="21">
    <source>
    </source>
</evidence>
<evidence type="ECO:0000305" key="22">
    <source>
    </source>
</evidence>
<evidence type="ECO:0007744" key="23">
    <source>
        <dbReference type="PDB" id="1O6S"/>
    </source>
</evidence>
<evidence type="ECO:0007744" key="24">
    <source>
        <dbReference type="PDB" id="1O6T"/>
    </source>
</evidence>
<evidence type="ECO:0007744" key="25">
    <source>
        <dbReference type="PDB" id="1O6V"/>
    </source>
</evidence>
<evidence type="ECO:0007744" key="26">
    <source>
        <dbReference type="PDB" id="2OMT"/>
    </source>
</evidence>
<evidence type="ECO:0007744" key="27">
    <source>
        <dbReference type="PDB" id="2OMU"/>
    </source>
</evidence>
<evidence type="ECO:0007744" key="28">
    <source>
        <dbReference type="PDB" id="2OMV"/>
    </source>
</evidence>
<evidence type="ECO:0007744" key="29">
    <source>
        <dbReference type="PDB" id="2OMW"/>
    </source>
</evidence>
<evidence type="ECO:0007744" key="30">
    <source>
        <dbReference type="PDB" id="2OMX"/>
    </source>
</evidence>
<evidence type="ECO:0007744" key="31">
    <source>
        <dbReference type="PDB" id="2OMY"/>
    </source>
</evidence>
<evidence type="ECO:0007744" key="32">
    <source>
        <dbReference type="PDB" id="2OMZ"/>
    </source>
</evidence>
<evidence type="ECO:0007829" key="33">
    <source>
        <dbReference type="PDB" id="1O6V"/>
    </source>
</evidence>
<proteinExistence type="evidence at protein level"/>
<reference key="1">
    <citation type="journal article" date="1991" name="Cell">
        <title>Entry of L. monocytogenes into cells is mediated by internalin, a repeat protein reminiscent of surface antigens from Gram-positive cocci.</title>
        <authorList>
            <person name="Gaillard J.-L."/>
            <person name="Berche P."/>
            <person name="Frehel C."/>
            <person name="Gouin E."/>
            <person name="Cossart P."/>
        </authorList>
    </citation>
    <scope>NUCLEOTIDE SEQUENCE [GENOMIC DNA]</scope>
    <scope>FUNCTION</scope>
    <scope>DOMAIN</scope>
    <scope>DISRUPTION PHENOTYPE</scope>
    <source>
        <strain>EGD-SmR / Serovar 1/2a</strain>
    </source>
</reference>
<reference key="2">
    <citation type="journal article" date="1993" name="Mol. Microbiol.">
        <title>Common features of Gram-positive bacterial proteins involved in cell recognition.</title>
        <authorList>
            <person name="Dramsi S."/>
            <person name="Dehoux P."/>
            <person name="Cossart P."/>
        </authorList>
    </citation>
    <scope>SEQUENCE REVISION TO N-TERMINUS</scope>
    <source>
        <strain>EGD-SmR / Serovar 1/2a</strain>
    </source>
</reference>
<reference key="3">
    <citation type="submission" date="1998-10" db="EMBL/GenBank/DDBJ databases">
        <title>Nucleotide sequence of the internalin operon from Listeria monocytogenes EGD.</title>
        <authorList>
            <person name="Hain T."/>
            <person name="Pashalidis P."/>
            <person name="Hudel M."/>
            <person name="Chakraborty T."/>
            <person name="Domann E."/>
        </authorList>
    </citation>
    <scope>NUCLEOTIDE SEQUENCE [GENOMIC DNA]</scope>
    <source>
        <strain>EGD / Mackaness / Serovar 1/2a</strain>
    </source>
</reference>
<reference key="4">
    <citation type="submission" date="2005-07" db="EMBL/GenBank/DDBJ databases">
        <authorList>
            <person name="Jiang L."/>
            <person name="Xu J."/>
            <person name="Chen N."/>
            <person name="Chen X."/>
            <person name="Fang W."/>
        </authorList>
    </citation>
    <scope>NUCLEOTIDE SEQUENCE [GENOMIC DNA]</scope>
    <source>
        <strain>H4</strain>
    </source>
</reference>
<reference key="5">
    <citation type="journal article" date="2001" name="Science">
        <title>Comparative genomics of Listeria species.</title>
        <authorList>
            <person name="Glaser P."/>
            <person name="Frangeul L."/>
            <person name="Buchrieser C."/>
            <person name="Rusniok C."/>
            <person name="Amend A."/>
            <person name="Baquero F."/>
            <person name="Berche P."/>
            <person name="Bloecker H."/>
            <person name="Brandt P."/>
            <person name="Chakraborty T."/>
            <person name="Charbit A."/>
            <person name="Chetouani F."/>
            <person name="Couve E."/>
            <person name="de Daruvar A."/>
            <person name="Dehoux P."/>
            <person name="Domann E."/>
            <person name="Dominguez-Bernal G."/>
            <person name="Duchaud E."/>
            <person name="Durant L."/>
            <person name="Dussurget O."/>
            <person name="Entian K.-D."/>
            <person name="Fsihi H."/>
            <person name="Garcia-del Portillo F."/>
            <person name="Garrido P."/>
            <person name="Gautier L."/>
            <person name="Goebel W."/>
            <person name="Gomez-Lopez N."/>
            <person name="Hain T."/>
            <person name="Hauf J."/>
            <person name="Jackson D."/>
            <person name="Jones L.-M."/>
            <person name="Kaerst U."/>
            <person name="Kreft J."/>
            <person name="Kuhn M."/>
            <person name="Kunst F."/>
            <person name="Kurapkat G."/>
            <person name="Madueno E."/>
            <person name="Maitournam A."/>
            <person name="Mata Vicente J."/>
            <person name="Ng E."/>
            <person name="Nedjari H."/>
            <person name="Nordsiek G."/>
            <person name="Novella S."/>
            <person name="de Pablos B."/>
            <person name="Perez-Diaz J.-C."/>
            <person name="Purcell R."/>
            <person name="Remmel B."/>
            <person name="Rose M."/>
            <person name="Schlueter T."/>
            <person name="Simoes N."/>
            <person name="Tierrez A."/>
            <person name="Vazquez-Boland J.-A."/>
            <person name="Voss H."/>
            <person name="Wehland J."/>
            <person name="Cossart P."/>
        </authorList>
    </citation>
    <scope>NUCLEOTIDE SEQUENCE [LARGE SCALE GENOMIC DNA]</scope>
    <source>
        <strain>ATCC BAA-679 / EGD-e</strain>
    </source>
</reference>
<reference key="6">
    <citation type="journal article" date="2002" name="Infect. Immun.">
        <title>The sortase SrtA of Listeria monocytogenes is involved in processing of internalin and in virulence.</title>
        <authorList>
            <person name="Garandeau C."/>
            <person name="Reglier-Poupet H."/>
            <person name="Dubail I."/>
            <person name="Beretti J.L."/>
            <person name="Berche P."/>
            <person name="Charbit A."/>
        </authorList>
    </citation>
    <scope>PROTEIN SEQUENCE OF 36-40</scope>
    <scope>SUBCELLULAR LOCATION</scope>
    <scope>PROCESSING BY SRTA</scope>
    <source>
        <strain>ATCC BAA-679 / EGD-e</strain>
    </source>
</reference>
<reference key="7">
    <citation type="journal article" date="1998" name="Curr. Microbiol.">
        <title>Identification and characterization of nucleotide sequence differences in three virulence-associated genes of Listeria monocytogenes strains representing clinically important serotypes.</title>
        <authorList>
            <person name="Vines A."/>
            <person name="Swaminathan B."/>
        </authorList>
    </citation>
    <scope>NUCLEOTIDE SEQUENCE [GENOMIC DNA] OF 73-418</scope>
    <source>
        <strain>F4233 / Serotype 1/2b</strain>
        <strain>F5782 / Serotype 4b</strain>
        <strain>F6789 / Serotype 1/2b</strain>
    </source>
</reference>
<reference key="8">
    <citation type="journal article" date="2000" name="Biochemistry">
        <title>Anchor structure of cell wall surface proteins in Listeria monocytogenes.</title>
        <authorList>
            <person name="Dhar G."/>
            <person name="Faull K.F."/>
            <person name="Schneewind O."/>
        </authorList>
    </citation>
    <scope>PROTEIN SEQUENCE OF 764-770</scope>
    <scope>SUBCELLULAR LOCATION</scope>
    <scope>SORTING SIGNAL</scope>
    <scope>CELL WALL ANCHORING</scope>
    <source>
        <strain>EGD / Mackaness / Serovar 1/2a</strain>
    </source>
</reference>
<reference key="9">
    <citation type="journal article" date="1996" name="Cell">
        <title>E-cadherin is the receptor for internalin, a surface protein required for entry of L. monocytogenes into epithelial cells.</title>
        <authorList>
            <person name="Mengaud J."/>
            <person name="Ohayon H."/>
            <person name="Gounon P."/>
            <person name="Mege R.M."/>
            <person name="Cossart P."/>
        </authorList>
    </citation>
    <scope>IDENTIFICATION OF HOST RECEPTOR</scope>
    <scope>FUNCTION</scope>
    <scope>ACTIVITY REGULATION</scope>
    <scope>INTERACTION WITH HUMAN CDH1</scope>
    <scope>DISRUPTION PHENOTYPE</scope>
    <source>
        <strain>ATCC BAA-679 / EGD-e</strain>
    </source>
</reference>
<reference key="10">
    <citation type="journal article" date="1999" name="EMBO J.">
        <title>A single amino acid in E-cadherin responsible for host specificity towards the human pathogen Listeria monocytogenes.</title>
        <authorList>
            <person name="Lecuit M."/>
            <person name="Dramsi S."/>
            <person name="Gottardi C."/>
            <person name="Fedor-Chaiken M."/>
            <person name="Gumbiner B."/>
            <person name="Cossart P."/>
        </authorList>
    </citation>
    <scope>FUNCTION</scope>
    <scope>HOST SPECIFICITY</scope>
    <scope>DISRUPTION PHENOTYPE</scope>
    <source>
        <strain>ATCC BAA-679 / EGD-e</strain>
    </source>
</reference>
<reference key="11">
    <citation type="journal article" date="2002" name="Mol. Microbiol.">
        <title>Inactivation of the srtA gene in Listeria monocytogenes inhibits anchoring of surface proteins and affects virulence.</title>
        <authorList>
            <person name="Bierne H."/>
            <person name="Mazmanian S.K."/>
            <person name="Trost M."/>
            <person name="Pucciarelli M.G."/>
            <person name="Liu G."/>
            <person name="Dehoux P."/>
            <person name="Jansch L."/>
            <person name="Garcia-del Portillo F."/>
            <person name="Schneewind O."/>
            <person name="Cossart P."/>
        </authorList>
    </citation>
    <scope>PROCESSING BY SRTA</scope>
    <scope>SUBCELLULAR LOCATION</scope>
    <scope>DISRUPTION PHENOTYPE</scope>
    <source>
        <strain>ATCC BAA-679 / EGD-e</strain>
    </source>
</reference>
<reference key="12">
    <citation type="journal article" date="2005" name="Proteomics">
        <title>Identification of substrates of the Listeria monocytogenes sortases A and B by a non-gel proteomic analysis.</title>
        <authorList>
            <person name="Pucciarelli M.G."/>
            <person name="Calvo E."/>
            <person name="Sabet C."/>
            <person name="Bierne H."/>
            <person name="Cossart P."/>
            <person name="Garcia-del Portillo F."/>
        </authorList>
    </citation>
    <scope>IDENTIFICATION BY MASS SPECTROMETRY</scope>
    <scope>PROCESSING BY SRTA</scope>
    <source>
        <strain>ATCC BAA-679 / EGD-e</strain>
    </source>
</reference>
<reference key="13">
    <citation type="journal article" date="2010" name="Infect. Immun.">
        <title>The stress-induced virulence protein InlH controls interleukin-6 production during murine listeriosis.</title>
        <authorList>
            <person name="Personnic N."/>
            <person name="Bruck S."/>
            <person name="Nahori M.A."/>
            <person name="Toledo-Arana A."/>
            <person name="Nikitas G."/>
            <person name="Lecuit M."/>
            <person name="Dussurget O."/>
            <person name="Cossart P."/>
            <person name="Bierne H."/>
        </authorList>
    </citation>
    <scope>SUBCELLULAR LOCATION</scope>
    <scope>INDUCTION</scope>
    <source>
        <strain>ATCC BAA-679 / EGD-e</strain>
    </source>
</reference>
<reference key="14">
    <citation type="journal article" date="2011" name="J. Bacteriol.">
        <title>Regulated shift from helical to polar localization of Listeria monocytogenes cell wall-anchored proteins.</title>
        <authorList>
            <person name="Bruck S."/>
            <person name="Personnic N."/>
            <person name="Prevost M.C."/>
            <person name="Cossart P."/>
            <person name="Bierne H."/>
        </authorList>
    </citation>
    <scope>SUBCELLULAR LOCATION</scope>
    <scope>INDUCTION</scope>
    <source>
        <strain>ATCC BAA-679 / EGD-e</strain>
    </source>
</reference>
<reference key="15">
    <citation type="journal article" date="2012" name="Int. Microbiol.">
        <title>Contribution of sortase A to the regulation of Listeria monocytogenes LPXTG surface proteins.</title>
        <authorList>
            <person name="Mariscotti J.F."/>
            <person name="Quereda J.J."/>
            <person name="Pucciarelli M.G."/>
        </authorList>
    </citation>
    <scope>SUBCELLULAR LOCATION</scope>
    <scope>PROCESSING BY SRTA</scope>
    <source>
        <strain>ATCC BAA-679 / EGD-e</strain>
    </source>
</reference>
<reference evidence="23 24 25" key="16">
    <citation type="journal article" date="2002" name="Cell">
        <title>Structure of internalin, a major invasion protein of Listeria monocytogenes, in complex with its human receptor E-cadherin.</title>
        <authorList>
            <person name="Schubert W.-D."/>
            <person name="Urbanke C."/>
            <person name="Ziehm T."/>
            <person name="Beier V."/>
            <person name="Machner M.P."/>
            <person name="Domann E."/>
            <person name="Wehland J."/>
            <person name="Chakraborty T."/>
            <person name="Heinz D.W."/>
        </authorList>
    </citation>
    <scope>X-RAY CRYSTALLOGRAPHY (1.8 ANGSTROMS) OF 36-496 ALONE AND IN COMPLEX WITH HUMAN CDH1</scope>
    <scope>SUBUNIT</scope>
    <scope>DOMAIN</scope>
    <scope>MUTAGENESIS OF PHE-150; TYR-343; TYR-347; PHE-367; TYR-369 AND TRP-387</scope>
    <source>
        <strain>ATCC BAA-679 / EGD-e</strain>
    </source>
</reference>
<reference evidence="28 29 31" key="17">
    <citation type="journal article" date="2007" name="Cell">
        <title>Extending the host range of Listeria monocytogenes by rational protein design.</title>
        <authorList>
            <person name="Wollert T."/>
            <person name="Pasche B."/>
            <person name="Rochon M."/>
            <person name="Deppenmeier S."/>
            <person name="van den Heuvel J."/>
            <person name="Gruber A.D."/>
            <person name="Heinz D.W."/>
            <person name="Lengeling A."/>
            <person name="Schubert W.D."/>
        </authorList>
    </citation>
    <scope>X-RAY CRYSTALLOGRAPHY (1.70 ANGSTROMS) OF 36-495 IN COMPLEX WITH HUMAN OR MOUSE CDH1</scope>
    <scope>SUBUNIT</scope>
    <scope>DOMAIN</scope>
    <scope>MUTAGENESIS OF SER-192 AND TYR-369</scope>
</reference>
<reference evidence="26 27 30 32" key="18">
    <citation type="journal article" date="2007" name="Proc. Natl. Acad. Sci. U.S.A.">
        <title>Thermodynamically reengineering the listerial invasion complex InlA/E-cadherin.</title>
        <authorList>
            <person name="Wollert T."/>
            <person name="Heinz D.W."/>
            <person name="Schubert W.D."/>
        </authorList>
    </citation>
    <scope>X-RAY CRYSTALLOGRAPHY (1.60 ANGSTROMS) OF 36-495 IN COMPLEX WITH HUMAN CDH1</scope>
    <scope>SUBUNIT</scope>
    <scope>DOMAIN</scope>
    <scope>MUTAGENESIS OF SER-192; GLY-194 AND TYR-369</scope>
</reference>
<comment type="function">
    <text evidence="3 11 15">Mediates the entry of L.monocytogenes into host intestinal epithelial cells; transformation with inlA alone allows L.innocua (a non-invasive species) to be taken up by host cells (PubMed:10406800, PubMed:1905979, PubMed:8601315). Binds to human receptor cadherin-1 (E-cadherin, CDH1); the chicken homolog of cadherin-1 but not cadherin-2 function as receptors (PubMed:8601315). Mouse cadherin-1 is not a receptor, however mutating a single surface-exposed residue (Glu-172 to Pro in mouse) allows cadherin-1 to act as a receptor for InlA (PubMed:10406800).</text>
</comment>
<comment type="activity regulation">
    <text evidence="15">Bacterial uptake is inhibited by EDTA and by anti-E-cadherin antibodies.</text>
</comment>
<comment type="subunit">
    <text evidence="7 9 10">Interacts with host (human) cadherin-1 (CDH1) (PubMed:12526809, PubMed:17540170, PubMed:17715295). The formation of the complex between inlA and cadherin-1 is calcium-dependent (PubMed:12526809). Mutagenesis studies show it is possible to increase the affinity of InlA for CDH1 by rational engineering of InlA residues (PubMed:17715295).</text>
</comment>
<comment type="interaction">
    <interactant intactId="EBI-1035388">
        <id>P0DJM0</id>
    </interactant>
    <interactant intactId="EBI-727477">
        <id>P12830</id>
        <label>CDH1</label>
    </interactant>
    <organismsDiffer>true</organismsDiffer>
    <experiments>3</experiments>
</comment>
<comment type="subcellular location">
    <subcellularLocation>
        <location evidence="1 4 6 12 13 14">Secreted</location>
        <location evidence="1 4 6 12 13 14">Cell wall</location>
        <topology evidence="1 4 6">Peptidoglycan-anchor</topology>
    </subcellularLocation>
    <subcellularLocation>
        <location evidence="5 12">Secreted</location>
    </subcellularLocation>
    <text evidence="13 14">In the absence of SrtA in exponential phase some protein is still anchored to the cell wall and a very small amount is secreted while overall protein levels are the same in the srtA mutant; in stationary phase almost no protein accumulates (PubMed:22837151). During exponential growth detected on the cell surface as a series of dots in a helical pattern, it is excluded from the septum; if expression is increased it accumulates at cell poles (PubMed:21725001). The helical pattern of InlA does not overlap with that of InlH, InlJ or Hbp2 (SvpA) (PubMed:21725001). In stationary phase colocalizes with InlH at cell poles and at the septum, the location shift requires SigB (PubMed:21725001).</text>
</comment>
<comment type="induction">
    <text evidence="8 12 13">More prevalent in stationary than exponential phase (at protein level) (PubMed:16247833, PubMed:21725001). Levels maybe post-transcriptionally decreased by InlH; disruption of inlH in some strains (EGD-e and EGD-2) leads to increased levels of InlA (at protein level) (PubMed:20176794).</text>
</comment>
<comment type="domain">
    <text evidence="7 9 10">Consists of an N-terminal cap, a leucine-rich repeat domain (LRR), and an Ig-like interrepeat domain.</text>
</comment>
<comment type="disruption phenotype">
    <text evidence="3 6 11 15">Deletion of both inlA and inlB prevents bacterial uptake by human enterocyte-like cell line Caco-2 (PubMed:1905979). Deletion of inlA alone decreases host cell entry; the reduction varies from 98% to none depending on the cell line tested (PubMed:10406800, PubMed:11929538, PubMed:8601315).</text>
</comment>
<comment type="similarity">
    <text evidence="17">Belongs to the internalin family.</text>
</comment>
<comment type="sequence caution" evidence="22">
    <conflict type="frameshift">
        <sequence resource="EMBL-CDS" id="AAA25289"/>
    </conflict>
</comment>
<feature type="signal peptide" evidence="5">
    <location>
        <begin position="1"/>
        <end position="35"/>
    </location>
</feature>
<feature type="chain" id="PRO_0000005609" description="Internalin A">
    <location>
        <begin position="36"/>
        <end position="770"/>
    </location>
</feature>
<feature type="propeptide" id="PRO_0000005610" description="Removed by sortase A" evidence="1 6 19 20 21">
    <location>
        <begin position="771"/>
        <end position="800"/>
    </location>
</feature>
<feature type="domain" description="LRRNT">
    <location>
        <begin position="36"/>
        <end position="76"/>
    </location>
</feature>
<feature type="repeat" description="LRR 1">
    <location>
        <begin position="77"/>
        <end position="98"/>
    </location>
</feature>
<feature type="repeat" description="LRR 2">
    <location>
        <begin position="99"/>
        <end position="120"/>
    </location>
</feature>
<feature type="repeat" description="LRR 3">
    <location>
        <begin position="121"/>
        <end position="142"/>
    </location>
</feature>
<feature type="repeat" description="LRR 4">
    <location>
        <begin position="143"/>
        <end position="164"/>
    </location>
</feature>
<feature type="repeat" description="LRR 5">
    <location>
        <begin position="165"/>
        <end position="186"/>
    </location>
</feature>
<feature type="repeat" description="LRR 6">
    <location>
        <begin position="187"/>
        <end position="207"/>
    </location>
</feature>
<feature type="repeat" description="LRR 7">
    <location>
        <begin position="208"/>
        <end position="229"/>
    </location>
</feature>
<feature type="repeat" description="LRR 8">
    <location>
        <begin position="230"/>
        <end position="251"/>
    </location>
</feature>
<feature type="repeat" description="LRR 9">
    <location>
        <begin position="252"/>
        <end position="273"/>
    </location>
</feature>
<feature type="repeat" description="LRR 10">
    <location>
        <begin position="274"/>
        <end position="295"/>
    </location>
</feature>
<feature type="repeat" description="LRR 11">
    <location>
        <begin position="296"/>
        <end position="317"/>
    </location>
</feature>
<feature type="repeat" description="LRR 12">
    <location>
        <begin position="318"/>
        <end position="339"/>
    </location>
</feature>
<feature type="repeat" description="LRR 13">
    <location>
        <begin position="340"/>
        <end position="361"/>
    </location>
</feature>
<feature type="repeat" description="LRR 14">
    <location>
        <begin position="362"/>
        <end position="383"/>
    </location>
</feature>
<feature type="repeat" description="LRR 15">
    <location>
        <begin position="384"/>
        <end position="405"/>
    </location>
</feature>
<feature type="domain" description="LRRCT">
    <location>
        <begin position="416"/>
        <end position="505"/>
    </location>
</feature>
<feature type="repeat" description="B-1">
    <location>
        <begin position="518"/>
        <end position="587"/>
    </location>
</feature>
<feature type="repeat" description="B-2">
    <location>
        <begin position="588"/>
        <end position="657"/>
    </location>
</feature>
<feature type="repeat" description="B-3">
    <location>
        <begin position="658"/>
        <end position="706"/>
    </location>
</feature>
<feature type="region of interest" description="3 X approximate tandem repeats, type B">
    <location>
        <begin position="518"/>
        <end position="706"/>
    </location>
</feature>
<feature type="region of interest" description="Disordered" evidence="2">
    <location>
        <begin position="705"/>
        <end position="757"/>
    </location>
</feature>
<feature type="short sequence motif" description="LPXTG sorting signal" evidence="1 18">
    <location>
        <begin position="767"/>
        <end position="771"/>
    </location>
</feature>
<feature type="compositionally biased region" description="Low complexity" evidence="2">
    <location>
        <begin position="711"/>
        <end position="753"/>
    </location>
</feature>
<feature type="modified residue" description="Pentaglycyl murein peptidoglycan amidated threonine" evidence="1 18">
    <location>
        <position position="770"/>
    </location>
</feature>
<feature type="sequence variant" description="In strain: H4.">
    <original>K</original>
    <variation>R</variation>
    <location>
        <position position="3"/>
    </location>
</feature>
<feature type="sequence variant" description="In strain: H4.">
    <original>F</original>
    <variation>L</variation>
    <location>
        <position position="19"/>
    </location>
</feature>
<feature type="sequence variant" description="In strain: EGD-SmR / Serovar 1/2a.">
    <original>T</original>
    <variation>A</variation>
    <location>
        <position position="51"/>
    </location>
</feature>
<feature type="sequence variant" description="In strain: EGD-SmR / Serovar 1/2a, F4233 /Serotype 1/2b, F6789 / Serotype 1/2b, F5782 / Serotype 4b and H4.">
    <original>V</original>
    <variation>L</variation>
    <location>
        <position position="94"/>
    </location>
</feature>
<feature type="sequence variant" description="In strain: EGD-SmR / Serovar 1/2a, F4233 /Serotype 1/2b, F6789 / Serotype 1/2b, F5782 / Serotype 4b and H4.">
    <original>N</original>
    <variation>D</variation>
    <location>
        <position position="118"/>
    </location>
</feature>
<feature type="sequence variant" description="In strain: F5782 / Serotype 4b and H4.">
    <original>T</original>
    <variation>S</variation>
    <location>
        <position position="142"/>
    </location>
</feature>
<feature type="sequence variant" description="In strain: EGD-SmR / Serovar 1/2a, F4233 /Serotype 1/2b, F6789 / Serotype 1/2b and H4.">
    <original>S</original>
    <variation>N</variation>
    <location>
        <position position="187"/>
    </location>
</feature>
<feature type="sequence variant" description="In strain: F5782 / Serotype 4b, F4233 /Serotype 1/2b and F6789 / Serotype 1/2b.">
    <original>F</original>
    <variation>L</variation>
    <location>
        <position position="193"/>
    </location>
</feature>
<feature type="sequence variant" description="In strain: F4233 / Serotype 1/2b and F6789 /Serotype 1/2b.">
    <original>L</original>
    <variation>W</variation>
    <location>
        <position position="253"/>
    </location>
</feature>
<feature type="sequence variant" description="In strain: F4233 / Serotype 1/2b and F5782 /Serotype 4b.">
    <original>S</original>
    <variation>P</variation>
    <location>
        <position position="292"/>
    </location>
</feature>
<feature type="sequence variant" description="In strain: F6789 / Serotype 1/2b.">
    <original>S</original>
    <variation>R</variation>
    <location>
        <position position="292"/>
    </location>
</feature>
<feature type="sequence variant" description="In strain: H4.">
    <original>N</original>
    <variation>S</variation>
    <location>
        <position position="321"/>
    </location>
</feature>
<feature type="sequence variant" description="In strain: H4.">
    <original>N</original>
    <variation>S</variation>
    <location>
        <position position="381"/>
    </location>
</feature>
<feature type="sequence variant" description="In strain: F4233 / Serotype 1/2b, F6789 /Serotype 1/2b and F5782 / Serotype 4b.">
    <original>A</original>
    <variation>E</variation>
    <location>
        <position position="416"/>
    </location>
</feature>
<feature type="sequence variant" description="In strain: EGD-SmR / Serovar 1/2a and H4.">
    <original>T</original>
    <variation>A</variation>
    <location>
        <position position="454"/>
    </location>
</feature>
<feature type="sequence variant" description="In strain: H4.">
    <original>S</original>
    <variation>N</variation>
    <location>
        <position position="474"/>
    </location>
</feature>
<feature type="sequence variant" description="In strain: H4.">
    <original>P</original>
    <variation>S</variation>
    <location>
        <position position="476"/>
    </location>
</feature>
<feature type="sequence variant" description="In strain: EGD-SmR / Serovar 1/2a and H4.">
    <original>V</original>
    <variation>A</variation>
    <location>
        <position position="500"/>
    </location>
</feature>
<feature type="sequence variant" description="In strain: H4.">
    <original>H</original>
    <variation>Y</variation>
    <location>
        <position position="530"/>
    </location>
</feature>
<feature type="sequence variant" description="In strain: H4.">
    <original>N</original>
    <variation>D</variation>
    <location>
        <position position="558"/>
    </location>
</feature>
<feature type="sequence variant" description="In strain: EGD-SmR / Serovar 1/2a.">
    <original>D</original>
    <variation>E</variation>
    <location>
        <position position="573"/>
    </location>
</feature>
<feature type="sequence variant" description="In strain: EGD-SmR / Serovar 1/2a.">
    <original>A</original>
    <variation>P</variation>
    <location>
        <position position="594"/>
    </location>
</feature>
<feature type="sequence variant" description="In strain: H4.">
    <original>S</original>
    <variation>T</variation>
    <location>
        <position position="648"/>
    </location>
</feature>
<feature type="sequence variant" description="In strain: H4.">
    <original>A</original>
    <variation>T</variation>
    <location>
        <position position="664"/>
    </location>
</feature>
<feature type="sequence variant" description="In strain: H4.">
    <original>P</original>
    <variation>S</variation>
    <location>
        <position position="729"/>
    </location>
</feature>
<feature type="sequence variant" description="In strain: H4.">
    <original>D</original>
    <variation>N</variation>
    <location>
        <position position="738"/>
    </location>
</feature>
<feature type="sequence variant" description="In strain: H4.">
    <original>L</original>
    <variation>I</variation>
    <location>
        <position position="781"/>
    </location>
</feature>
<feature type="sequence variant" description="In strain: H4.">
    <original>M</original>
    <variation>V</variation>
    <location>
        <position position="790"/>
    </location>
</feature>
<feature type="mutagenesis site" description="No longer binds human cadherin-1 (CDH1) domain 1." evidence="7">
    <original>F</original>
    <variation>A</variation>
    <location>
        <position position="150"/>
    </location>
</feature>
<feature type="mutagenesis site" description="40-fold increased affinity for human CDH1 domain 1. 6700-fold increased affinity for CDH1, better adhesion to human Caco cells, 1000-fold more virulent in mice; when associated with S-369." evidence="9 10">
    <original>S</original>
    <variation>N</variation>
    <location>
        <position position="192"/>
    </location>
</feature>
<feature type="mutagenesis site" description="Increased affinity for human CDH1 domain 1." evidence="10">
    <original>G</original>
    <variation>SS</variation>
    <location>
        <position position="194"/>
    </location>
</feature>
<feature type="mutagenesis site" description="No longer binds human CDH1 domain 1." evidence="7">
    <original>Y</original>
    <variation>A</variation>
    <location>
        <position position="343"/>
    </location>
</feature>
<feature type="mutagenesis site" description="Decreased affinity for human CDH1 domain 1." evidence="7">
    <original>Y</original>
    <variation>A</variation>
    <location>
        <position position="347"/>
    </location>
</feature>
<feature type="mutagenesis site" description="No longer binds human CDH1 domain 1." evidence="7">
    <original>F</original>
    <variation>A</variation>
    <location>
        <position position="367"/>
    </location>
</feature>
<feature type="mutagenesis site" description="Increased affinity for human CDH1 domain 1." evidence="7 10">
    <original>Y</original>
    <variation>A</variation>
    <location>
        <position position="369"/>
    </location>
</feature>
<feature type="mutagenesis site" description="170-fold increased affinity for human CDH1 domain 1. 6700-fold increased affinity for CDH1, better adhesion to human Caco cells, 1000-fold more virulent in mice; when associated with N-192." evidence="9 10">
    <original>Y</original>
    <variation>S</variation>
    <location>
        <position position="369"/>
    </location>
</feature>
<feature type="mutagenesis site" description="No longer binds human CDH1 domain 1." evidence="7">
    <original>W</original>
    <variation>A</variation>
    <location>
        <position position="387"/>
    </location>
</feature>
<feature type="helix" evidence="33">
    <location>
        <begin position="44"/>
        <end position="46"/>
    </location>
</feature>
<feature type="helix" evidence="33">
    <location>
        <begin position="51"/>
        <end position="60"/>
    </location>
</feature>
<feature type="strand" evidence="33">
    <location>
        <begin position="68"/>
        <end position="70"/>
    </location>
</feature>
<feature type="helix" evidence="33">
    <location>
        <begin position="72"/>
        <end position="76"/>
    </location>
</feature>
<feature type="strand" evidence="33">
    <location>
        <begin position="80"/>
        <end position="82"/>
    </location>
</feature>
<feature type="helix" evidence="33">
    <location>
        <begin position="94"/>
        <end position="96"/>
    </location>
</feature>
<feature type="strand" evidence="33">
    <location>
        <begin position="102"/>
        <end position="104"/>
    </location>
</feature>
<feature type="helix" evidence="33">
    <location>
        <begin position="114"/>
        <end position="116"/>
    </location>
</feature>
<feature type="strand" evidence="33">
    <location>
        <begin position="124"/>
        <end position="126"/>
    </location>
</feature>
<feature type="helix" evidence="33">
    <location>
        <begin position="136"/>
        <end position="138"/>
    </location>
</feature>
<feature type="strand" evidence="33">
    <location>
        <begin position="146"/>
        <end position="148"/>
    </location>
</feature>
<feature type="helix" evidence="33">
    <location>
        <begin position="158"/>
        <end position="160"/>
    </location>
</feature>
<feature type="strand" evidence="33">
    <location>
        <begin position="167"/>
        <end position="176"/>
    </location>
</feature>
<feature type="helix" evidence="33">
    <location>
        <begin position="180"/>
        <end position="182"/>
    </location>
</feature>
<feature type="strand" evidence="33">
    <location>
        <begin position="189"/>
        <end position="196"/>
    </location>
</feature>
<feature type="helix" evidence="33">
    <location>
        <begin position="201"/>
        <end position="203"/>
    </location>
</feature>
<feature type="strand" evidence="33">
    <location>
        <begin position="211"/>
        <end position="213"/>
    </location>
</feature>
<feature type="helix" evidence="33">
    <location>
        <begin position="223"/>
        <end position="227"/>
    </location>
</feature>
<feature type="strand" evidence="33">
    <location>
        <begin position="232"/>
        <end position="235"/>
    </location>
</feature>
<feature type="helix" evidence="33">
    <location>
        <begin position="245"/>
        <end position="249"/>
    </location>
</feature>
<feature type="strand" evidence="33">
    <location>
        <begin position="255"/>
        <end position="257"/>
    </location>
</feature>
<feature type="helix" evidence="33">
    <location>
        <begin position="267"/>
        <end position="271"/>
    </location>
</feature>
<feature type="strand" evidence="33">
    <location>
        <begin position="276"/>
        <end position="279"/>
    </location>
</feature>
<feature type="helix" evidence="33">
    <location>
        <begin position="289"/>
        <end position="291"/>
    </location>
</feature>
<feature type="strand" evidence="33">
    <location>
        <begin position="298"/>
        <end position="301"/>
    </location>
</feature>
<feature type="helix" evidence="33">
    <location>
        <begin position="311"/>
        <end position="313"/>
    </location>
</feature>
<feature type="strand" evidence="33">
    <location>
        <begin position="320"/>
        <end position="323"/>
    </location>
</feature>
<feature type="helix" evidence="33">
    <location>
        <begin position="333"/>
        <end position="337"/>
    </location>
</feature>
<feature type="strand" evidence="33">
    <location>
        <begin position="342"/>
        <end position="345"/>
    </location>
</feature>
<feature type="helix" evidence="33">
    <location>
        <begin position="355"/>
        <end position="359"/>
    </location>
</feature>
<feature type="strand" evidence="33">
    <location>
        <begin position="365"/>
        <end position="367"/>
    </location>
</feature>
<feature type="helix" evidence="33">
    <location>
        <begin position="377"/>
        <end position="379"/>
    </location>
</feature>
<feature type="strand" evidence="33">
    <location>
        <begin position="387"/>
        <end position="389"/>
    </location>
</feature>
<feature type="helix" evidence="33">
    <location>
        <begin position="399"/>
        <end position="401"/>
    </location>
</feature>
<feature type="strand" evidence="33">
    <location>
        <begin position="409"/>
        <end position="411"/>
    </location>
</feature>
<feature type="strand" evidence="33">
    <location>
        <begin position="415"/>
        <end position="418"/>
    </location>
</feature>
<feature type="strand" evidence="33">
    <location>
        <begin position="426"/>
        <end position="431"/>
    </location>
</feature>
<feature type="strand" evidence="33">
    <location>
        <begin position="445"/>
        <end position="448"/>
    </location>
</feature>
<feature type="strand" evidence="33">
    <location>
        <begin position="452"/>
        <end position="454"/>
    </location>
</feature>
<feature type="strand" evidence="33">
    <location>
        <begin position="457"/>
        <end position="461"/>
    </location>
</feature>
<feature type="strand" evidence="33">
    <location>
        <begin position="467"/>
        <end position="479"/>
    </location>
</feature>
<feature type="strand" evidence="33">
    <location>
        <begin position="482"/>
        <end position="494"/>
    </location>
</feature>
<keyword id="KW-0002">3D-structure</keyword>
<keyword id="KW-0134">Cell wall</keyword>
<keyword id="KW-0903">Direct protein sequencing</keyword>
<keyword id="KW-0433">Leucine-rich repeat</keyword>
<keyword id="KW-0572">Peptidoglycan-anchor</keyword>
<keyword id="KW-1185">Reference proteome</keyword>
<keyword id="KW-0677">Repeat</keyword>
<keyword id="KW-0964">Secreted</keyword>
<keyword id="KW-0732">Signal</keyword>
<keyword id="KW-0843">Virulence</keyword>
<gene>
    <name evidence="16" type="primary">inlA</name>
    <name type="ordered locus">lmo0433</name>
</gene>